<sequence length="490" mass="54782">MTSKSSPLIFERSREGRYAYSLPKSDIKTNSVESLLDDKFIRKNKAEFPEVAELDLVRHYTELSNKNFGVDNGFYPLGSCTMKYNPKINEKVARIPGFSESHPLQDEDQVQGSLEIIYSLQEELKEITGMDEVTLQPAAGAHGEWTALMIFKAYHENNGEGHRDEVIVPDSAHGTNPASASFAGFKSVTVKSNERGEVDIDDLKRVVNENTAAIMLTNPNTLGIFEKNIMEIREIVHNAGGLLYYDGANLNAIMDKVRPGDMGFDAVHLNLHKTFTGPHGGGGPGSGPVGVVKELASYLPKPMVIKDGDKFKYDNDIKNSIGRVKPFYGNFGIYLRAYTYIRTMGATGLKEVSEAAVLNANYIKARLSKHFEIPYKQYCKHEFVLSGVRQKEFGVRTLDMAKRLLDFGVHPPTIYFPLNVEEGMMIEPTETESKETLDYFIDTLISIAEEAKNDPDKVLEAPHTTVIDRLDEATAARKPILKFENLKQEK</sequence>
<comment type="function">
    <text evidence="1">The glycine cleavage system catalyzes the degradation of glycine. The P protein binds the alpha-amino group of glycine through its pyridoxal phosphate cofactor; CO(2) is released and the remaining methylamine moiety is then transferred to the lipoamide cofactor of the H protein.</text>
</comment>
<comment type="catalytic activity">
    <reaction evidence="1">
        <text>N(6)-[(R)-lipoyl]-L-lysyl-[glycine-cleavage complex H protein] + glycine + H(+) = N(6)-[(R)-S(8)-aminomethyldihydrolipoyl]-L-lysyl-[glycine-cleavage complex H protein] + CO2</text>
        <dbReference type="Rhea" id="RHEA:24304"/>
        <dbReference type="Rhea" id="RHEA-COMP:10494"/>
        <dbReference type="Rhea" id="RHEA-COMP:10495"/>
        <dbReference type="ChEBI" id="CHEBI:15378"/>
        <dbReference type="ChEBI" id="CHEBI:16526"/>
        <dbReference type="ChEBI" id="CHEBI:57305"/>
        <dbReference type="ChEBI" id="CHEBI:83099"/>
        <dbReference type="ChEBI" id="CHEBI:83143"/>
        <dbReference type="EC" id="1.4.4.2"/>
    </reaction>
</comment>
<comment type="cofactor">
    <cofactor evidence="1">
        <name>pyridoxal 5'-phosphate</name>
        <dbReference type="ChEBI" id="CHEBI:597326"/>
    </cofactor>
</comment>
<comment type="subunit">
    <text evidence="1">The glycine cleavage system is composed of four proteins: P, T, L and H. In this organism, the P 'protein' is a heterodimer of two subunits.</text>
</comment>
<comment type="similarity">
    <text evidence="1">Belongs to the GcvP family. C-terminal subunit subfamily.</text>
</comment>
<accession>Q2FY35</accession>
<name>GCSPB_STAA8</name>
<protein>
    <recommendedName>
        <fullName evidence="1">Probable glycine dehydrogenase (decarboxylating) subunit 2</fullName>
        <ecNumber evidence="1">1.4.4.2</ecNumber>
    </recommendedName>
    <alternativeName>
        <fullName evidence="1">Glycine cleavage system P-protein subunit 2</fullName>
    </alternativeName>
    <alternativeName>
        <fullName evidence="1">Glycine decarboxylase subunit 2</fullName>
    </alternativeName>
    <alternativeName>
        <fullName evidence="1">Glycine dehydrogenase (aminomethyl-transferring) subunit 2</fullName>
    </alternativeName>
</protein>
<gene>
    <name evidence="1" type="primary">gcvPB</name>
    <name type="ordered locus">SAOUHSC_01632</name>
</gene>
<feature type="chain" id="PRO_1000045704" description="Probable glycine dehydrogenase (decarboxylating) subunit 2">
    <location>
        <begin position="1"/>
        <end position="490"/>
    </location>
</feature>
<feature type="modified residue" description="N6-(pyridoxal phosphate)lysine" evidence="1">
    <location>
        <position position="273"/>
    </location>
</feature>
<organism>
    <name type="scientific">Staphylococcus aureus (strain NCTC 8325 / PS 47)</name>
    <dbReference type="NCBI Taxonomy" id="93061"/>
    <lineage>
        <taxon>Bacteria</taxon>
        <taxon>Bacillati</taxon>
        <taxon>Bacillota</taxon>
        <taxon>Bacilli</taxon>
        <taxon>Bacillales</taxon>
        <taxon>Staphylococcaceae</taxon>
        <taxon>Staphylococcus</taxon>
    </lineage>
</organism>
<proteinExistence type="inferred from homology"/>
<evidence type="ECO:0000255" key="1">
    <source>
        <dbReference type="HAMAP-Rule" id="MF_00713"/>
    </source>
</evidence>
<keyword id="KW-0560">Oxidoreductase</keyword>
<keyword id="KW-0663">Pyridoxal phosphate</keyword>
<keyword id="KW-1185">Reference proteome</keyword>
<dbReference type="EC" id="1.4.4.2" evidence="1"/>
<dbReference type="EMBL" id="CP000253">
    <property type="protein sequence ID" value="ABD30709.1"/>
    <property type="molecule type" value="Genomic_DNA"/>
</dbReference>
<dbReference type="RefSeq" id="WP_000202189.1">
    <property type="nucleotide sequence ID" value="NZ_LS483365.1"/>
</dbReference>
<dbReference type="RefSeq" id="YP_500145.1">
    <property type="nucleotide sequence ID" value="NC_007795.1"/>
</dbReference>
<dbReference type="SMR" id="Q2FY35"/>
<dbReference type="STRING" id="93061.SAOUHSC_01632"/>
<dbReference type="PaxDb" id="1280-SAXN108_1558"/>
<dbReference type="GeneID" id="3919969"/>
<dbReference type="KEGG" id="sao:SAOUHSC_01632"/>
<dbReference type="PATRIC" id="fig|93061.5.peg.1485"/>
<dbReference type="eggNOG" id="COG1003">
    <property type="taxonomic scope" value="Bacteria"/>
</dbReference>
<dbReference type="HOGENOM" id="CLU_004620_5_0_9"/>
<dbReference type="OrthoDB" id="9801272at2"/>
<dbReference type="PRO" id="PR:Q2FY35"/>
<dbReference type="Proteomes" id="UP000008816">
    <property type="component" value="Chromosome"/>
</dbReference>
<dbReference type="GO" id="GO:0005829">
    <property type="term" value="C:cytosol"/>
    <property type="evidence" value="ECO:0000318"/>
    <property type="project" value="GO_Central"/>
</dbReference>
<dbReference type="GO" id="GO:0005960">
    <property type="term" value="C:glycine cleavage complex"/>
    <property type="evidence" value="ECO:0000318"/>
    <property type="project" value="GO_Central"/>
</dbReference>
<dbReference type="GO" id="GO:0016594">
    <property type="term" value="F:glycine binding"/>
    <property type="evidence" value="ECO:0000318"/>
    <property type="project" value="GO_Central"/>
</dbReference>
<dbReference type="GO" id="GO:0004375">
    <property type="term" value="F:glycine dehydrogenase (decarboxylating) activity"/>
    <property type="evidence" value="ECO:0000318"/>
    <property type="project" value="GO_Central"/>
</dbReference>
<dbReference type="GO" id="GO:0030170">
    <property type="term" value="F:pyridoxal phosphate binding"/>
    <property type="evidence" value="ECO:0000318"/>
    <property type="project" value="GO_Central"/>
</dbReference>
<dbReference type="GO" id="GO:0019464">
    <property type="term" value="P:glycine decarboxylation via glycine cleavage system"/>
    <property type="evidence" value="ECO:0000318"/>
    <property type="project" value="GO_Central"/>
</dbReference>
<dbReference type="CDD" id="cd00613">
    <property type="entry name" value="GDC-P"/>
    <property type="match status" value="1"/>
</dbReference>
<dbReference type="FunFam" id="3.40.640.10:FF:000034">
    <property type="entry name" value="Probable glycine dehydrogenase (decarboxylating) subunit 2"/>
    <property type="match status" value="1"/>
</dbReference>
<dbReference type="FunFam" id="3.90.1150.10:FF:000014">
    <property type="entry name" value="Probable glycine dehydrogenase (decarboxylating) subunit 2"/>
    <property type="match status" value="1"/>
</dbReference>
<dbReference type="Gene3D" id="6.20.440.10">
    <property type="match status" value="1"/>
</dbReference>
<dbReference type="Gene3D" id="3.90.1150.10">
    <property type="entry name" value="Aspartate Aminotransferase, domain 1"/>
    <property type="match status" value="1"/>
</dbReference>
<dbReference type="Gene3D" id="3.40.640.10">
    <property type="entry name" value="Type I PLP-dependent aspartate aminotransferase-like (Major domain)"/>
    <property type="match status" value="1"/>
</dbReference>
<dbReference type="HAMAP" id="MF_00713">
    <property type="entry name" value="GcvPB"/>
    <property type="match status" value="1"/>
</dbReference>
<dbReference type="InterPro" id="IPR000192">
    <property type="entry name" value="Aminotrans_V_dom"/>
</dbReference>
<dbReference type="InterPro" id="IPR023012">
    <property type="entry name" value="GcvPB"/>
</dbReference>
<dbReference type="InterPro" id="IPR049316">
    <property type="entry name" value="GDC-P_C"/>
</dbReference>
<dbReference type="InterPro" id="IPR020581">
    <property type="entry name" value="GDC_P"/>
</dbReference>
<dbReference type="InterPro" id="IPR015424">
    <property type="entry name" value="PyrdxlP-dep_Trfase"/>
</dbReference>
<dbReference type="InterPro" id="IPR015421">
    <property type="entry name" value="PyrdxlP-dep_Trfase_major"/>
</dbReference>
<dbReference type="InterPro" id="IPR015422">
    <property type="entry name" value="PyrdxlP-dep_Trfase_small"/>
</dbReference>
<dbReference type="NCBIfam" id="NF003346">
    <property type="entry name" value="PRK04366.1"/>
    <property type="match status" value="1"/>
</dbReference>
<dbReference type="PANTHER" id="PTHR11773:SF1">
    <property type="entry name" value="GLYCINE DEHYDROGENASE (DECARBOXYLATING), MITOCHONDRIAL"/>
    <property type="match status" value="1"/>
</dbReference>
<dbReference type="PANTHER" id="PTHR11773">
    <property type="entry name" value="GLYCINE DEHYDROGENASE, DECARBOXYLATING"/>
    <property type="match status" value="1"/>
</dbReference>
<dbReference type="Pfam" id="PF00266">
    <property type="entry name" value="Aminotran_5"/>
    <property type="match status" value="1"/>
</dbReference>
<dbReference type="Pfam" id="PF21478">
    <property type="entry name" value="GcvP2_C"/>
    <property type="match status" value="1"/>
</dbReference>
<dbReference type="SUPFAM" id="SSF53383">
    <property type="entry name" value="PLP-dependent transferases"/>
    <property type="match status" value="1"/>
</dbReference>
<reference key="1">
    <citation type="book" date="2006" name="Gram positive pathogens, 2nd edition">
        <title>The Staphylococcus aureus NCTC 8325 genome.</title>
        <editorList>
            <person name="Fischetti V."/>
            <person name="Novick R."/>
            <person name="Ferretti J."/>
            <person name="Portnoy D."/>
            <person name="Rood J."/>
        </editorList>
        <authorList>
            <person name="Gillaspy A.F."/>
            <person name="Worrell V."/>
            <person name="Orvis J."/>
            <person name="Roe B.A."/>
            <person name="Dyer D.W."/>
            <person name="Iandolo J.J."/>
        </authorList>
    </citation>
    <scope>NUCLEOTIDE SEQUENCE [LARGE SCALE GENOMIC DNA]</scope>
    <source>
        <strain>NCTC 8325 / PS 47</strain>
    </source>
</reference>